<gene>
    <name evidence="1" type="primary">feoC</name>
    <name type="ordered locus">SDY_3666</name>
</gene>
<reference key="1">
    <citation type="journal article" date="2005" name="Nucleic Acids Res.">
        <title>Genome dynamics and diversity of Shigella species, the etiologic agents of bacillary dysentery.</title>
        <authorList>
            <person name="Yang F."/>
            <person name="Yang J."/>
            <person name="Zhang X."/>
            <person name="Chen L."/>
            <person name="Jiang Y."/>
            <person name="Yan Y."/>
            <person name="Tang X."/>
            <person name="Wang J."/>
            <person name="Xiong Z."/>
            <person name="Dong J."/>
            <person name="Xue Y."/>
            <person name="Zhu Y."/>
            <person name="Xu X."/>
            <person name="Sun L."/>
            <person name="Chen S."/>
            <person name="Nie H."/>
            <person name="Peng J."/>
            <person name="Xu J."/>
            <person name="Wang Y."/>
            <person name="Yuan Z."/>
            <person name="Wen Y."/>
            <person name="Yao Z."/>
            <person name="Shen Y."/>
            <person name="Qiang B."/>
            <person name="Hou Y."/>
            <person name="Yu J."/>
            <person name="Jin Q."/>
        </authorList>
    </citation>
    <scope>NUCLEOTIDE SEQUENCE [LARGE SCALE GENOMIC DNA]</scope>
    <source>
        <strain>Sd197</strain>
    </source>
</reference>
<accession>Q32AM4</accession>
<feature type="chain" id="PRO_0000313069" description="Probable [Fe-S]-dependent transcriptional repressor">
    <location>
        <begin position="1"/>
        <end position="78"/>
    </location>
</feature>
<feature type="binding site" evidence="1">
    <location>
        <position position="56"/>
    </location>
    <ligand>
        <name>iron-sulfur cluster</name>
        <dbReference type="ChEBI" id="CHEBI:30408"/>
    </ligand>
</feature>
<feature type="binding site" evidence="1">
    <location>
        <position position="61"/>
    </location>
    <ligand>
        <name>iron-sulfur cluster</name>
        <dbReference type="ChEBI" id="CHEBI:30408"/>
    </ligand>
</feature>
<feature type="binding site" evidence="1">
    <location>
        <position position="64"/>
    </location>
    <ligand>
        <name>iron-sulfur cluster</name>
        <dbReference type="ChEBI" id="CHEBI:30408"/>
    </ligand>
</feature>
<feature type="binding site" evidence="1">
    <location>
        <position position="70"/>
    </location>
    <ligand>
        <name>iron-sulfur cluster</name>
        <dbReference type="ChEBI" id="CHEBI:30408"/>
    </ligand>
</feature>
<name>FEOC_SHIDS</name>
<keyword id="KW-0238">DNA-binding</keyword>
<keyword id="KW-0408">Iron</keyword>
<keyword id="KW-0411">Iron-sulfur</keyword>
<keyword id="KW-0479">Metal-binding</keyword>
<keyword id="KW-1185">Reference proteome</keyword>
<keyword id="KW-0678">Repressor</keyword>
<keyword id="KW-0804">Transcription</keyword>
<keyword id="KW-0805">Transcription regulation</keyword>
<dbReference type="EMBL" id="CP000034">
    <property type="protein sequence ID" value="ABB63631.1"/>
    <property type="molecule type" value="Genomic_DNA"/>
</dbReference>
<dbReference type="RefSeq" id="WP_000157586.1">
    <property type="nucleotide sequence ID" value="NC_007606.1"/>
</dbReference>
<dbReference type="RefSeq" id="YP_405122.1">
    <property type="nucleotide sequence ID" value="NC_007606.1"/>
</dbReference>
<dbReference type="SMR" id="Q32AM4"/>
<dbReference type="STRING" id="300267.SDY_3666"/>
<dbReference type="EnsemblBacteria" id="ABB63631">
    <property type="protein sequence ID" value="ABB63631"/>
    <property type="gene ID" value="SDY_3666"/>
</dbReference>
<dbReference type="GeneID" id="86948257"/>
<dbReference type="KEGG" id="sdy:SDY_3666"/>
<dbReference type="PATRIC" id="fig|300267.13.peg.4350"/>
<dbReference type="HOGENOM" id="CLU_189182_0_0_6"/>
<dbReference type="Proteomes" id="UP000002716">
    <property type="component" value="Chromosome"/>
</dbReference>
<dbReference type="GO" id="GO:0003677">
    <property type="term" value="F:DNA binding"/>
    <property type="evidence" value="ECO:0007669"/>
    <property type="project" value="UniProtKB-KW"/>
</dbReference>
<dbReference type="GO" id="GO:0005506">
    <property type="term" value="F:iron ion binding"/>
    <property type="evidence" value="ECO:0007669"/>
    <property type="project" value="UniProtKB-UniRule"/>
</dbReference>
<dbReference type="GO" id="GO:0051536">
    <property type="term" value="F:iron-sulfur cluster binding"/>
    <property type="evidence" value="ECO:0007669"/>
    <property type="project" value="UniProtKB-KW"/>
</dbReference>
<dbReference type="Gene3D" id="1.10.10.10">
    <property type="entry name" value="Winged helix-like DNA-binding domain superfamily/Winged helix DNA-binding domain"/>
    <property type="match status" value="1"/>
</dbReference>
<dbReference type="HAMAP" id="MF_01586">
    <property type="entry name" value="FeoC"/>
    <property type="match status" value="1"/>
</dbReference>
<dbReference type="InterPro" id="IPR023732">
    <property type="entry name" value="FeoC"/>
</dbReference>
<dbReference type="InterPro" id="IPR015102">
    <property type="entry name" value="Tscrpt_reg_HTH_FeoC"/>
</dbReference>
<dbReference type="InterPro" id="IPR036388">
    <property type="entry name" value="WH-like_DNA-bd_sf"/>
</dbReference>
<dbReference type="InterPro" id="IPR036390">
    <property type="entry name" value="WH_DNA-bd_sf"/>
</dbReference>
<dbReference type="NCBIfam" id="NF011960">
    <property type="entry name" value="PRK15431.1"/>
    <property type="match status" value="1"/>
</dbReference>
<dbReference type="Pfam" id="PF09012">
    <property type="entry name" value="FeoC"/>
    <property type="match status" value="1"/>
</dbReference>
<dbReference type="SUPFAM" id="SSF46785">
    <property type="entry name" value="Winged helix' DNA-binding domain"/>
    <property type="match status" value="1"/>
</dbReference>
<organism>
    <name type="scientific">Shigella dysenteriae serotype 1 (strain Sd197)</name>
    <dbReference type="NCBI Taxonomy" id="300267"/>
    <lineage>
        <taxon>Bacteria</taxon>
        <taxon>Pseudomonadati</taxon>
        <taxon>Pseudomonadota</taxon>
        <taxon>Gammaproteobacteria</taxon>
        <taxon>Enterobacterales</taxon>
        <taxon>Enterobacteriaceae</taxon>
        <taxon>Shigella</taxon>
    </lineage>
</organism>
<sequence>MASLIQVRDLLALRGRMEAAQISQTLNTPQPMINAMLQQLESMGKAVRIQEEPDGCLSGSCKSCPEGKACLREWWALR</sequence>
<proteinExistence type="inferred from homology"/>
<comment type="function">
    <text evidence="1">May function as a transcriptional regulator that controls feoABC expression.</text>
</comment>
<comment type="similarity">
    <text evidence="1">Belongs to the FeoC family.</text>
</comment>
<protein>
    <recommendedName>
        <fullName evidence="1">Probable [Fe-S]-dependent transcriptional repressor</fullName>
    </recommendedName>
</protein>
<evidence type="ECO:0000255" key="1">
    <source>
        <dbReference type="HAMAP-Rule" id="MF_01586"/>
    </source>
</evidence>